<sequence>MGAAFKWGAAARKTVFPLFYFLIFFAFGALFPLLSVYLQEEARLSGAAIGWIMSLPPIVTMAAQPLWGTAADYTRKPVGLLLAALVLAALFGVMYALAGSYRLFVVLTVLLSAMQSAIVPLSDSLALRHVHEQGGNYGAIRLWGSLGFAMAVLAVGWLSDHIAFAVIFYAFSLALLTAAALATRLPRYPMGAPGALTRQDVRGLLASRPFRLLLVATFLLFGPILANNSYFGLLIHELGGTLTGIGLAFLFAAGSEAPFMKAADRLIGRFGMVRLLLLAALISAARWLAYAADPPLWFVYMTTVVQGCSVGLAIPTALQYARRLAPERVQSTAVALYSAVGNGLGAWFCTLVGGYLLERWQIGAVYLFFSICTIVGVLVLLLLAKRERTAGEEK</sequence>
<organism>
    <name type="scientific">Geobacillus stearothermophilus</name>
    <name type="common">Bacillus stearothermophilus</name>
    <dbReference type="NCBI Taxonomy" id="1422"/>
    <lineage>
        <taxon>Bacteria</taxon>
        <taxon>Bacillati</taxon>
        <taxon>Bacillota</taxon>
        <taxon>Bacilli</taxon>
        <taxon>Bacillales</taxon>
        <taxon>Anoxybacillaceae</taxon>
        <taxon>Geobacillus</taxon>
    </lineage>
</organism>
<evidence type="ECO:0000250" key="1"/>
<evidence type="ECO:0000305" key="2"/>
<reference key="1">
    <citation type="journal article" date="1994" name="Mol. Gen. Genet.">
        <title>Molecular cloning of a maltose transport gene from Bacillus stearothermophilus and its expression in Escherichia coli K-12.</title>
        <authorList>
            <person name="Liong E.C."/>
            <person name="Ferenci T."/>
        </authorList>
    </citation>
    <scope>NUCLEOTIDE SEQUENCE [GENOMIC DNA]</scope>
    <source>
        <strain>ATCC 7953 / DSM 5934 / JCM 9488 / NBRC 13737 / NCIB 8157 / NCTC 10007 / NCA 1518</strain>
    </source>
</reference>
<feature type="chain" id="PRO_0000196191" description="Maltose permease">
    <location>
        <begin position="1"/>
        <end position="394"/>
    </location>
</feature>
<feature type="topological domain" description="Cytoplasmic" evidence="1">
    <location>
        <begin position="1"/>
        <end position="11"/>
    </location>
</feature>
<feature type="transmembrane region" description="Helical; Name=1" evidence="1">
    <location>
        <begin position="12"/>
        <end position="38"/>
    </location>
</feature>
<feature type="topological domain" description="Extracellular" evidence="1">
    <location>
        <begin position="39"/>
        <end position="45"/>
    </location>
</feature>
<feature type="transmembrane region" description="Helical; Name=2" evidence="1">
    <location>
        <begin position="46"/>
        <end position="74"/>
    </location>
</feature>
<feature type="topological domain" description="Cytoplasmic" evidence="1">
    <location>
        <begin position="75"/>
        <end position="78"/>
    </location>
</feature>
<feature type="transmembrane region" description="Helical; Name=3" evidence="1">
    <location>
        <begin position="79"/>
        <end position="104"/>
    </location>
</feature>
<feature type="topological domain" description="Extracellular" evidence="1">
    <location>
        <begin position="105"/>
        <end position="108"/>
    </location>
</feature>
<feature type="transmembrane region" description="Helical; Name=4" evidence="1">
    <location>
        <begin position="109"/>
        <end position="126"/>
    </location>
</feature>
<feature type="topological domain" description="Cytoplasmic" evidence="1">
    <location>
        <begin position="127"/>
        <end position="137"/>
    </location>
</feature>
<feature type="transmembrane region" description="Helical; Name=5" evidence="1">
    <location>
        <begin position="138"/>
        <end position="160"/>
    </location>
</feature>
<feature type="topological domain" description="Extracellular" evidence="1">
    <location>
        <begin position="161"/>
        <end position="163"/>
    </location>
</feature>
<feature type="transmembrane region" description="Helical; Name=6" evidence="1">
    <location>
        <begin position="164"/>
        <end position="183"/>
    </location>
</feature>
<feature type="topological domain" description="Cytoplasmic" evidence="1">
    <location>
        <begin position="184"/>
        <end position="213"/>
    </location>
</feature>
<feature type="transmembrane region" description="Helical; Name=7" evidence="1">
    <location>
        <begin position="214"/>
        <end position="233"/>
    </location>
</feature>
<feature type="topological domain" description="Extracellular" evidence="1">
    <location>
        <begin position="234"/>
        <end position="237"/>
    </location>
</feature>
<feature type="transmembrane region" description="Helical; Name=8" evidence="1">
    <location>
        <begin position="238"/>
        <end position="262"/>
    </location>
</feature>
<feature type="topological domain" description="Cytoplasmic" evidence="1">
    <location>
        <begin position="263"/>
        <end position="272"/>
    </location>
</feature>
<feature type="transmembrane region" description="Helical; Name=9" evidence="1">
    <location>
        <begin position="273"/>
        <end position="292"/>
    </location>
</feature>
<feature type="topological domain" description="Extracellular" evidence="1">
    <location>
        <begin position="293"/>
        <end position="295"/>
    </location>
</feature>
<feature type="transmembrane region" description="Helical; Name=10" evidence="1">
    <location>
        <begin position="296"/>
        <end position="318"/>
    </location>
</feature>
<feature type="topological domain" description="Cytoplasmic" evidence="1">
    <location>
        <begin position="319"/>
        <end position="330"/>
    </location>
</feature>
<feature type="transmembrane region" description="Helical; Name=11" evidence="1">
    <location>
        <begin position="331"/>
        <end position="358"/>
    </location>
</feature>
<feature type="topological domain" description="Extracellular" evidence="1">
    <location>
        <begin position="359"/>
        <end position="361"/>
    </location>
</feature>
<feature type="transmembrane region" description="Helical; Name=12" evidence="1">
    <location>
        <begin position="362"/>
        <end position="382"/>
    </location>
</feature>
<feature type="topological domain" description="Cytoplasmic" evidence="1">
    <location>
        <begin position="383"/>
        <end position="394"/>
    </location>
</feature>
<protein>
    <recommendedName>
        <fullName>Maltose permease</fullName>
    </recommendedName>
</protein>
<name>MALA_GEOSE</name>
<proteinExistence type="inferred from homology"/>
<keyword id="KW-1003">Cell membrane</keyword>
<keyword id="KW-0472">Membrane</keyword>
<keyword id="KW-0769">Symport</keyword>
<keyword id="KW-0812">Transmembrane</keyword>
<keyword id="KW-1133">Transmembrane helix</keyword>
<keyword id="KW-0813">Transport</keyword>
<gene>
    <name type="primary">malA</name>
</gene>
<accession>Q45632</accession>
<comment type="function">
    <text>High affinity transport of maltose.</text>
</comment>
<comment type="subcellular location">
    <subcellularLocation>
        <location evidence="2">Cell membrane</location>
        <topology evidence="2">Multi-pass membrane protein</topology>
    </subcellularLocation>
</comment>
<comment type="similarity">
    <text evidence="2">Belongs to the major facilitator superfamily.</text>
</comment>
<dbReference type="EMBL" id="L13418">
    <property type="protein sequence ID" value="AAA71980.1"/>
    <property type="molecule type" value="Unassigned_DNA"/>
</dbReference>
<dbReference type="PIR" id="S43915">
    <property type="entry name" value="S43915"/>
</dbReference>
<dbReference type="RefSeq" id="WP_033014530.1">
    <property type="nucleotide sequence ID" value="NZ_JARMSZ010000023.1"/>
</dbReference>
<dbReference type="SMR" id="Q45632"/>
<dbReference type="TCDB" id="2.A.1.65.9">
    <property type="family name" value="the major facilitator superfamily (mfs)"/>
</dbReference>
<dbReference type="GO" id="GO:0005886">
    <property type="term" value="C:plasma membrane"/>
    <property type="evidence" value="ECO:0007669"/>
    <property type="project" value="UniProtKB-SubCell"/>
</dbReference>
<dbReference type="GO" id="GO:0015212">
    <property type="term" value="F:cytidine transmembrane transporter activity"/>
    <property type="evidence" value="ECO:0007669"/>
    <property type="project" value="TreeGrafter"/>
</dbReference>
<dbReference type="GO" id="GO:0015293">
    <property type="term" value="F:symporter activity"/>
    <property type="evidence" value="ECO:0007669"/>
    <property type="project" value="UniProtKB-KW"/>
</dbReference>
<dbReference type="GO" id="GO:0015213">
    <property type="term" value="F:uridine transmembrane transporter activity"/>
    <property type="evidence" value="ECO:0007669"/>
    <property type="project" value="TreeGrafter"/>
</dbReference>
<dbReference type="CDD" id="cd17335">
    <property type="entry name" value="MFS_MFSD6"/>
    <property type="match status" value="1"/>
</dbReference>
<dbReference type="Gene3D" id="1.20.1250.20">
    <property type="entry name" value="MFS general substrate transporter like domains"/>
    <property type="match status" value="2"/>
</dbReference>
<dbReference type="InterPro" id="IPR024989">
    <property type="entry name" value="MFS_assoc_dom"/>
</dbReference>
<dbReference type="InterPro" id="IPR020846">
    <property type="entry name" value="MFS_dom"/>
</dbReference>
<dbReference type="InterPro" id="IPR036259">
    <property type="entry name" value="MFS_trans_sf"/>
</dbReference>
<dbReference type="PANTHER" id="PTHR23522">
    <property type="entry name" value="BLL5896 PROTEIN"/>
    <property type="match status" value="1"/>
</dbReference>
<dbReference type="PANTHER" id="PTHR23522:SF4">
    <property type="entry name" value="NUCLEOSIDE PERMEASE NUPG-RELATED"/>
    <property type="match status" value="1"/>
</dbReference>
<dbReference type="Pfam" id="PF12832">
    <property type="entry name" value="MFS_1_like"/>
    <property type="match status" value="1"/>
</dbReference>
<dbReference type="SUPFAM" id="SSF103473">
    <property type="entry name" value="MFS general substrate transporter"/>
    <property type="match status" value="1"/>
</dbReference>
<dbReference type="PROSITE" id="PS50850">
    <property type="entry name" value="MFS"/>
    <property type="match status" value="1"/>
</dbReference>